<proteinExistence type="inferred from homology"/>
<organism>
    <name type="scientific">Deinococcus geothermalis (strain DSM 11300 / CIP 105573 / AG-3a)</name>
    <dbReference type="NCBI Taxonomy" id="319795"/>
    <lineage>
        <taxon>Bacteria</taxon>
        <taxon>Thermotogati</taxon>
        <taxon>Deinococcota</taxon>
        <taxon>Deinococci</taxon>
        <taxon>Deinococcales</taxon>
        <taxon>Deinococcaceae</taxon>
        <taxon>Deinococcus</taxon>
    </lineage>
</organism>
<evidence type="ECO:0000255" key="1">
    <source>
        <dbReference type="HAMAP-Rule" id="MF_00227"/>
    </source>
</evidence>
<evidence type="ECO:0000256" key="2">
    <source>
        <dbReference type="SAM" id="MobiDB-lite"/>
    </source>
</evidence>
<sequence>MKGEREFRRVRQQGVALRDPLFTLRVTDYRPRHGEVWRPQAIIGIVVSKKTLRRAVDRNRARRRVREALRTLPGGLPPCRAILLPNPGVLTVPFPELQAALVRVLAQVPGRVKRKGGGPGGNRRSAPPGSAPLTDDGRLRGEP</sequence>
<name>RNPA_DEIGD</name>
<feature type="chain" id="PRO_1000194629" description="Ribonuclease P protein component">
    <location>
        <begin position="1"/>
        <end position="143"/>
    </location>
</feature>
<feature type="region of interest" description="Disordered" evidence="2">
    <location>
        <begin position="111"/>
        <end position="143"/>
    </location>
</feature>
<dbReference type="EC" id="3.1.26.5" evidence="1"/>
<dbReference type="EMBL" id="CP000359">
    <property type="protein sequence ID" value="ABF45862.1"/>
    <property type="molecule type" value="Genomic_DNA"/>
</dbReference>
<dbReference type="RefSeq" id="WP_011530696.1">
    <property type="nucleotide sequence ID" value="NC_008025.1"/>
</dbReference>
<dbReference type="SMR" id="Q1IY22"/>
<dbReference type="STRING" id="319795.Dgeo_1567"/>
<dbReference type="KEGG" id="dge:Dgeo_1567"/>
<dbReference type="HOGENOM" id="CLU_117179_0_0_0"/>
<dbReference type="Proteomes" id="UP000002431">
    <property type="component" value="Chromosome"/>
</dbReference>
<dbReference type="GO" id="GO:0030677">
    <property type="term" value="C:ribonuclease P complex"/>
    <property type="evidence" value="ECO:0007669"/>
    <property type="project" value="TreeGrafter"/>
</dbReference>
<dbReference type="GO" id="GO:0042781">
    <property type="term" value="F:3'-tRNA processing endoribonuclease activity"/>
    <property type="evidence" value="ECO:0007669"/>
    <property type="project" value="TreeGrafter"/>
</dbReference>
<dbReference type="GO" id="GO:0004526">
    <property type="term" value="F:ribonuclease P activity"/>
    <property type="evidence" value="ECO:0007669"/>
    <property type="project" value="UniProtKB-UniRule"/>
</dbReference>
<dbReference type="GO" id="GO:0000049">
    <property type="term" value="F:tRNA binding"/>
    <property type="evidence" value="ECO:0007669"/>
    <property type="project" value="UniProtKB-UniRule"/>
</dbReference>
<dbReference type="GO" id="GO:0001682">
    <property type="term" value="P:tRNA 5'-leader removal"/>
    <property type="evidence" value="ECO:0007669"/>
    <property type="project" value="UniProtKB-UniRule"/>
</dbReference>
<dbReference type="Gene3D" id="3.30.230.10">
    <property type="match status" value="1"/>
</dbReference>
<dbReference type="HAMAP" id="MF_00227">
    <property type="entry name" value="RNase_P"/>
    <property type="match status" value="1"/>
</dbReference>
<dbReference type="InterPro" id="IPR020568">
    <property type="entry name" value="Ribosomal_Su5_D2-typ_SF"/>
</dbReference>
<dbReference type="InterPro" id="IPR014721">
    <property type="entry name" value="Ribsml_uS5_D2-typ_fold_subgr"/>
</dbReference>
<dbReference type="InterPro" id="IPR000100">
    <property type="entry name" value="RNase_P"/>
</dbReference>
<dbReference type="InterPro" id="IPR020539">
    <property type="entry name" value="RNase_P_CS"/>
</dbReference>
<dbReference type="NCBIfam" id="TIGR00188">
    <property type="entry name" value="rnpA"/>
    <property type="match status" value="1"/>
</dbReference>
<dbReference type="PANTHER" id="PTHR33992">
    <property type="entry name" value="RIBONUCLEASE P PROTEIN COMPONENT"/>
    <property type="match status" value="1"/>
</dbReference>
<dbReference type="PANTHER" id="PTHR33992:SF1">
    <property type="entry name" value="RIBONUCLEASE P PROTEIN COMPONENT"/>
    <property type="match status" value="1"/>
</dbReference>
<dbReference type="Pfam" id="PF00825">
    <property type="entry name" value="Ribonuclease_P"/>
    <property type="match status" value="1"/>
</dbReference>
<dbReference type="SUPFAM" id="SSF54211">
    <property type="entry name" value="Ribosomal protein S5 domain 2-like"/>
    <property type="match status" value="1"/>
</dbReference>
<dbReference type="PROSITE" id="PS00648">
    <property type="entry name" value="RIBONUCLEASE_P"/>
    <property type="match status" value="1"/>
</dbReference>
<protein>
    <recommendedName>
        <fullName evidence="1">Ribonuclease P protein component</fullName>
        <shortName evidence="1">RNase P protein</shortName>
        <shortName evidence="1">RNaseP protein</shortName>
        <ecNumber evidence="1">3.1.26.5</ecNumber>
    </recommendedName>
    <alternativeName>
        <fullName evidence="1">Protein C5</fullName>
    </alternativeName>
</protein>
<keyword id="KW-0255">Endonuclease</keyword>
<keyword id="KW-0378">Hydrolase</keyword>
<keyword id="KW-0540">Nuclease</keyword>
<keyword id="KW-0694">RNA-binding</keyword>
<keyword id="KW-0819">tRNA processing</keyword>
<gene>
    <name evidence="1" type="primary">rnpA</name>
    <name type="ordered locus">Dgeo_1567</name>
</gene>
<comment type="function">
    <text evidence="1">RNaseP catalyzes the removal of the 5'-leader sequence from pre-tRNA to produce the mature 5'-terminus. It can also cleave other RNA substrates such as 4.5S RNA. The protein component plays an auxiliary but essential role in vivo by binding to the 5'-leader sequence and broadening the substrate specificity of the ribozyme.</text>
</comment>
<comment type="catalytic activity">
    <reaction evidence="1">
        <text>Endonucleolytic cleavage of RNA, removing 5'-extranucleotides from tRNA precursor.</text>
        <dbReference type="EC" id="3.1.26.5"/>
    </reaction>
</comment>
<comment type="subunit">
    <text evidence="1">Consists of a catalytic RNA component (M1 or rnpB) and a protein subunit.</text>
</comment>
<comment type="similarity">
    <text evidence="1">Belongs to the RnpA family.</text>
</comment>
<reference key="1">
    <citation type="submission" date="2006-04" db="EMBL/GenBank/DDBJ databases">
        <title>Complete sequence of chromosome of Deinococcus geothermalis DSM 11300.</title>
        <authorList>
            <person name="Copeland A."/>
            <person name="Lucas S."/>
            <person name="Lapidus A."/>
            <person name="Barry K."/>
            <person name="Detter J.C."/>
            <person name="Glavina del Rio T."/>
            <person name="Hammon N."/>
            <person name="Israni S."/>
            <person name="Dalin E."/>
            <person name="Tice H."/>
            <person name="Pitluck S."/>
            <person name="Brettin T."/>
            <person name="Bruce D."/>
            <person name="Han C."/>
            <person name="Tapia R."/>
            <person name="Saunders E."/>
            <person name="Gilna P."/>
            <person name="Schmutz J."/>
            <person name="Larimer F."/>
            <person name="Land M."/>
            <person name="Hauser L."/>
            <person name="Kyrpides N."/>
            <person name="Kim E."/>
            <person name="Daly M.J."/>
            <person name="Fredrickson J.K."/>
            <person name="Makarova K.S."/>
            <person name="Gaidamakova E.K."/>
            <person name="Zhai M."/>
            <person name="Richardson P."/>
        </authorList>
    </citation>
    <scope>NUCLEOTIDE SEQUENCE [LARGE SCALE GENOMIC DNA]</scope>
    <source>
        <strain>DSM 11300 / CIP 105573 / AG-3a</strain>
    </source>
</reference>
<accession>Q1IY22</accession>